<proteinExistence type="inferred from homology"/>
<name>END4_STAAW</name>
<accession>P63539</accession>
<accession>Q99TT9</accession>
<dbReference type="EC" id="3.1.21.2" evidence="1"/>
<dbReference type="EMBL" id="BA000033">
    <property type="protein sequence ID" value="BAB95374.1"/>
    <property type="molecule type" value="Genomic_DNA"/>
</dbReference>
<dbReference type="RefSeq" id="WP_000924220.1">
    <property type="nucleotide sequence ID" value="NC_003923.1"/>
</dbReference>
<dbReference type="SMR" id="P63539"/>
<dbReference type="KEGG" id="sam:MW1509"/>
<dbReference type="HOGENOM" id="CLU_025885_4_1_9"/>
<dbReference type="GO" id="GO:0008833">
    <property type="term" value="F:deoxyribonuclease IV (phage-T4-induced) activity"/>
    <property type="evidence" value="ECO:0007669"/>
    <property type="project" value="UniProtKB-UniRule"/>
</dbReference>
<dbReference type="GO" id="GO:0003677">
    <property type="term" value="F:DNA binding"/>
    <property type="evidence" value="ECO:0007669"/>
    <property type="project" value="InterPro"/>
</dbReference>
<dbReference type="GO" id="GO:0003906">
    <property type="term" value="F:DNA-(apurinic or apyrimidinic site) endonuclease activity"/>
    <property type="evidence" value="ECO:0007669"/>
    <property type="project" value="TreeGrafter"/>
</dbReference>
<dbReference type="GO" id="GO:0008081">
    <property type="term" value="F:phosphoric diester hydrolase activity"/>
    <property type="evidence" value="ECO:0007669"/>
    <property type="project" value="TreeGrafter"/>
</dbReference>
<dbReference type="GO" id="GO:0008270">
    <property type="term" value="F:zinc ion binding"/>
    <property type="evidence" value="ECO:0007669"/>
    <property type="project" value="UniProtKB-UniRule"/>
</dbReference>
<dbReference type="GO" id="GO:0006284">
    <property type="term" value="P:base-excision repair"/>
    <property type="evidence" value="ECO:0007669"/>
    <property type="project" value="TreeGrafter"/>
</dbReference>
<dbReference type="CDD" id="cd00019">
    <property type="entry name" value="AP2Ec"/>
    <property type="match status" value="1"/>
</dbReference>
<dbReference type="FunFam" id="3.20.20.150:FF:000001">
    <property type="entry name" value="Probable endonuclease 4"/>
    <property type="match status" value="1"/>
</dbReference>
<dbReference type="Gene3D" id="3.20.20.150">
    <property type="entry name" value="Divalent-metal-dependent TIM barrel enzymes"/>
    <property type="match status" value="1"/>
</dbReference>
<dbReference type="HAMAP" id="MF_00152">
    <property type="entry name" value="Nfo"/>
    <property type="match status" value="1"/>
</dbReference>
<dbReference type="InterPro" id="IPR001719">
    <property type="entry name" value="AP_endonuc_2"/>
</dbReference>
<dbReference type="InterPro" id="IPR018246">
    <property type="entry name" value="AP_endonuc_F2_Zn_BS"/>
</dbReference>
<dbReference type="InterPro" id="IPR036237">
    <property type="entry name" value="Xyl_isomerase-like_sf"/>
</dbReference>
<dbReference type="InterPro" id="IPR013022">
    <property type="entry name" value="Xyl_isomerase-like_TIM-brl"/>
</dbReference>
<dbReference type="NCBIfam" id="TIGR00587">
    <property type="entry name" value="nfo"/>
    <property type="match status" value="1"/>
</dbReference>
<dbReference type="NCBIfam" id="NF002196">
    <property type="entry name" value="PRK01060.1-1"/>
    <property type="match status" value="1"/>
</dbReference>
<dbReference type="PANTHER" id="PTHR21445:SF0">
    <property type="entry name" value="APURINIC-APYRIMIDINIC ENDONUCLEASE"/>
    <property type="match status" value="1"/>
</dbReference>
<dbReference type="PANTHER" id="PTHR21445">
    <property type="entry name" value="ENDONUCLEASE IV ENDODEOXYRIBONUCLEASE IV"/>
    <property type="match status" value="1"/>
</dbReference>
<dbReference type="Pfam" id="PF01261">
    <property type="entry name" value="AP_endonuc_2"/>
    <property type="match status" value="1"/>
</dbReference>
<dbReference type="SMART" id="SM00518">
    <property type="entry name" value="AP2Ec"/>
    <property type="match status" value="1"/>
</dbReference>
<dbReference type="SUPFAM" id="SSF51658">
    <property type="entry name" value="Xylose isomerase-like"/>
    <property type="match status" value="1"/>
</dbReference>
<dbReference type="PROSITE" id="PS00729">
    <property type="entry name" value="AP_NUCLEASE_F2_1"/>
    <property type="match status" value="1"/>
</dbReference>
<dbReference type="PROSITE" id="PS00730">
    <property type="entry name" value="AP_NUCLEASE_F2_2"/>
    <property type="match status" value="1"/>
</dbReference>
<dbReference type="PROSITE" id="PS00731">
    <property type="entry name" value="AP_NUCLEASE_F2_3"/>
    <property type="match status" value="1"/>
</dbReference>
<dbReference type="PROSITE" id="PS51432">
    <property type="entry name" value="AP_NUCLEASE_F2_4"/>
    <property type="match status" value="1"/>
</dbReference>
<evidence type="ECO:0000255" key="1">
    <source>
        <dbReference type="HAMAP-Rule" id="MF_00152"/>
    </source>
</evidence>
<keyword id="KW-0227">DNA damage</keyword>
<keyword id="KW-0234">DNA repair</keyword>
<keyword id="KW-0255">Endonuclease</keyword>
<keyword id="KW-0378">Hydrolase</keyword>
<keyword id="KW-0479">Metal-binding</keyword>
<keyword id="KW-0540">Nuclease</keyword>
<keyword id="KW-0862">Zinc</keyword>
<organism>
    <name type="scientific">Staphylococcus aureus (strain MW2)</name>
    <dbReference type="NCBI Taxonomy" id="196620"/>
    <lineage>
        <taxon>Bacteria</taxon>
        <taxon>Bacillati</taxon>
        <taxon>Bacillota</taxon>
        <taxon>Bacilli</taxon>
        <taxon>Bacillales</taxon>
        <taxon>Staphylococcaceae</taxon>
        <taxon>Staphylococcus</taxon>
    </lineage>
</organism>
<reference key="1">
    <citation type="journal article" date="2002" name="Lancet">
        <title>Genome and virulence determinants of high virulence community-acquired MRSA.</title>
        <authorList>
            <person name="Baba T."/>
            <person name="Takeuchi F."/>
            <person name="Kuroda M."/>
            <person name="Yuzawa H."/>
            <person name="Aoki K."/>
            <person name="Oguchi A."/>
            <person name="Nagai Y."/>
            <person name="Iwama N."/>
            <person name="Asano K."/>
            <person name="Naimi T."/>
            <person name="Kuroda H."/>
            <person name="Cui L."/>
            <person name="Yamamoto K."/>
            <person name="Hiramatsu K."/>
        </authorList>
    </citation>
    <scope>NUCLEOTIDE SEQUENCE [LARGE SCALE GENOMIC DNA]</scope>
    <source>
        <strain>MW2</strain>
    </source>
</reference>
<feature type="chain" id="PRO_0000190874" description="Probable endonuclease 4">
    <location>
        <begin position="1"/>
        <end position="296"/>
    </location>
</feature>
<feature type="binding site" evidence="1">
    <location>
        <position position="68"/>
    </location>
    <ligand>
        <name>Zn(2+)</name>
        <dbReference type="ChEBI" id="CHEBI:29105"/>
        <label>1</label>
    </ligand>
</feature>
<feature type="binding site" evidence="1">
    <location>
        <position position="109"/>
    </location>
    <ligand>
        <name>Zn(2+)</name>
        <dbReference type="ChEBI" id="CHEBI:29105"/>
        <label>1</label>
    </ligand>
</feature>
<feature type="binding site" evidence="1">
    <location>
        <position position="144"/>
    </location>
    <ligand>
        <name>Zn(2+)</name>
        <dbReference type="ChEBI" id="CHEBI:29105"/>
        <label>1</label>
    </ligand>
</feature>
<feature type="binding site" evidence="1">
    <location>
        <position position="144"/>
    </location>
    <ligand>
        <name>Zn(2+)</name>
        <dbReference type="ChEBI" id="CHEBI:29105"/>
        <label>2</label>
    </ligand>
</feature>
<feature type="binding site" evidence="1">
    <location>
        <position position="178"/>
    </location>
    <ligand>
        <name>Zn(2+)</name>
        <dbReference type="ChEBI" id="CHEBI:29105"/>
        <label>2</label>
    </ligand>
</feature>
<feature type="binding site" evidence="1">
    <location>
        <position position="181"/>
    </location>
    <ligand>
        <name>Zn(2+)</name>
        <dbReference type="ChEBI" id="CHEBI:29105"/>
        <label>3</label>
    </ligand>
</feature>
<feature type="binding site" evidence="1">
    <location>
        <position position="213"/>
    </location>
    <ligand>
        <name>Zn(2+)</name>
        <dbReference type="ChEBI" id="CHEBI:29105"/>
        <label>2</label>
    </ligand>
</feature>
<feature type="binding site" evidence="1">
    <location>
        <position position="226"/>
    </location>
    <ligand>
        <name>Zn(2+)</name>
        <dbReference type="ChEBI" id="CHEBI:29105"/>
        <label>3</label>
    </ligand>
</feature>
<feature type="binding site" evidence="1">
    <location>
        <position position="228"/>
    </location>
    <ligand>
        <name>Zn(2+)</name>
        <dbReference type="ChEBI" id="CHEBI:29105"/>
        <label>3</label>
    </ligand>
</feature>
<feature type="binding site" evidence="1">
    <location>
        <position position="258"/>
    </location>
    <ligand>
        <name>Zn(2+)</name>
        <dbReference type="ChEBI" id="CHEBI:29105"/>
        <label>2</label>
    </ligand>
</feature>
<comment type="function">
    <text evidence="1">Endonuclease IV plays a role in DNA repair. It cleaves phosphodiester bonds at apurinic or apyrimidinic (AP) sites, generating a 3'-hydroxyl group and a 5'-terminal sugar phosphate.</text>
</comment>
<comment type="catalytic activity">
    <reaction evidence="1">
        <text>Endonucleolytic cleavage to 5'-phosphooligonucleotide end-products.</text>
        <dbReference type="EC" id="3.1.21.2"/>
    </reaction>
</comment>
<comment type="cofactor">
    <cofactor evidence="1">
        <name>Zn(2+)</name>
        <dbReference type="ChEBI" id="CHEBI:29105"/>
    </cofactor>
    <text evidence="1">Binds 3 Zn(2+) ions.</text>
</comment>
<comment type="similarity">
    <text evidence="1">Belongs to the AP endonuclease 2 family.</text>
</comment>
<protein>
    <recommendedName>
        <fullName evidence="1">Probable endonuclease 4</fullName>
        <ecNumber evidence="1">3.1.21.2</ecNumber>
    </recommendedName>
    <alternativeName>
        <fullName evidence="1">Endodeoxyribonuclease IV</fullName>
    </alternativeName>
    <alternativeName>
        <fullName evidence="1">Endonuclease IV</fullName>
    </alternativeName>
</protein>
<gene>
    <name evidence="1" type="primary">nfo</name>
    <name type="ordered locus">MW1509</name>
</gene>
<sequence length="296" mass="33185">MLLGSHVSMSGKKMLEGSAIEAYEYGETTFMIYTGAPQNTRRKSIEDLNITKGHEVMEKYGLSNIVVHAPYIINIANTTKPETFNLGVDFLQQEIERTQAIGAKDIVLHPGAHVGAGVDAGINKIIEGLNEVLTNDNNVRIALETMAGKGTEIGRSFEELARIIDGVHNNERLSVCFDTCHTHDAGYNVKEDFDGVLNEFDKIIGVDRIKVVHVNDSKNDRGAQKDRHENIGFGYIGFDALNYIVHHDSFKDIPKILETPYVGEDKKNKKPPYKLEIEMLKQQQFDPELKNKVMQQ</sequence>